<feature type="chain" id="PRO_1000019576" description="Exodeoxyribonuclease 7 small subunit">
    <location>
        <begin position="1"/>
        <end position="71"/>
    </location>
</feature>
<name>EX7S_CLOB1</name>
<evidence type="ECO:0000255" key="1">
    <source>
        <dbReference type="HAMAP-Rule" id="MF_00337"/>
    </source>
</evidence>
<reference key="1">
    <citation type="journal article" date="2007" name="PLoS ONE">
        <title>Analysis of the neurotoxin complex genes in Clostridium botulinum A1-A4 and B1 strains: BoNT/A3, /Ba4 and /B1 clusters are located within plasmids.</title>
        <authorList>
            <person name="Smith T.J."/>
            <person name="Hill K.K."/>
            <person name="Foley B.T."/>
            <person name="Detter J.C."/>
            <person name="Munk A.C."/>
            <person name="Bruce D.C."/>
            <person name="Doggett N.A."/>
            <person name="Smith L.A."/>
            <person name="Marks J.D."/>
            <person name="Xie G."/>
            <person name="Brettin T.S."/>
        </authorList>
    </citation>
    <scope>NUCLEOTIDE SEQUENCE [LARGE SCALE GENOMIC DNA]</scope>
    <source>
        <strain>ATCC 19397 / Type A</strain>
    </source>
</reference>
<protein>
    <recommendedName>
        <fullName evidence="1">Exodeoxyribonuclease 7 small subunit</fullName>
        <ecNumber evidence="1">3.1.11.6</ecNumber>
    </recommendedName>
    <alternativeName>
        <fullName evidence="1">Exodeoxyribonuclease VII small subunit</fullName>
        <shortName evidence="1">Exonuclease VII small subunit</shortName>
    </alternativeName>
</protein>
<keyword id="KW-0963">Cytoplasm</keyword>
<keyword id="KW-0269">Exonuclease</keyword>
<keyword id="KW-0378">Hydrolase</keyword>
<keyword id="KW-0540">Nuclease</keyword>
<proteinExistence type="inferred from homology"/>
<sequence length="71" mass="8308">MEKKKESFENMLEKLETIVDSMDNGEITLEDSMKSYEEGIKLCNKLYKVLKDAEGKIKILENNKEEDFENS</sequence>
<comment type="function">
    <text evidence="1">Bidirectionally degrades single-stranded DNA into large acid-insoluble oligonucleotides, which are then degraded further into small acid-soluble oligonucleotides.</text>
</comment>
<comment type="catalytic activity">
    <reaction evidence="1">
        <text>Exonucleolytic cleavage in either 5'- to 3'- or 3'- to 5'-direction to yield nucleoside 5'-phosphates.</text>
        <dbReference type="EC" id="3.1.11.6"/>
    </reaction>
</comment>
<comment type="subunit">
    <text evidence="1">Heterooligomer composed of large and small subunits.</text>
</comment>
<comment type="subcellular location">
    <subcellularLocation>
        <location evidence="1">Cytoplasm</location>
    </subcellularLocation>
</comment>
<comment type="similarity">
    <text evidence="1">Belongs to the XseB family.</text>
</comment>
<accession>A7FUT9</accession>
<dbReference type="EC" id="3.1.11.6" evidence="1"/>
<dbReference type="EMBL" id="CP000726">
    <property type="protein sequence ID" value="ABS33973.1"/>
    <property type="molecule type" value="Genomic_DNA"/>
</dbReference>
<dbReference type="RefSeq" id="WP_011986443.1">
    <property type="nucleotide sequence ID" value="NC_009697.1"/>
</dbReference>
<dbReference type="SMR" id="A7FUT9"/>
<dbReference type="KEGG" id="cba:CLB_1821"/>
<dbReference type="HOGENOM" id="CLU_145918_3_2_9"/>
<dbReference type="GO" id="GO:0005829">
    <property type="term" value="C:cytosol"/>
    <property type="evidence" value="ECO:0007669"/>
    <property type="project" value="TreeGrafter"/>
</dbReference>
<dbReference type="GO" id="GO:0009318">
    <property type="term" value="C:exodeoxyribonuclease VII complex"/>
    <property type="evidence" value="ECO:0007669"/>
    <property type="project" value="InterPro"/>
</dbReference>
<dbReference type="GO" id="GO:0008855">
    <property type="term" value="F:exodeoxyribonuclease VII activity"/>
    <property type="evidence" value="ECO:0007669"/>
    <property type="project" value="UniProtKB-UniRule"/>
</dbReference>
<dbReference type="GO" id="GO:0006308">
    <property type="term" value="P:DNA catabolic process"/>
    <property type="evidence" value="ECO:0007669"/>
    <property type="project" value="UniProtKB-UniRule"/>
</dbReference>
<dbReference type="FunFam" id="1.10.287.1040:FF:000010">
    <property type="entry name" value="Exodeoxyribonuclease 7 small subunit"/>
    <property type="match status" value="1"/>
</dbReference>
<dbReference type="Gene3D" id="1.10.287.1040">
    <property type="entry name" value="Exonuclease VII, small subunit"/>
    <property type="match status" value="1"/>
</dbReference>
<dbReference type="HAMAP" id="MF_00337">
    <property type="entry name" value="Exonuc_7_S"/>
    <property type="match status" value="1"/>
</dbReference>
<dbReference type="InterPro" id="IPR003761">
    <property type="entry name" value="Exonuc_VII_S"/>
</dbReference>
<dbReference type="InterPro" id="IPR037004">
    <property type="entry name" value="Exonuc_VII_ssu_sf"/>
</dbReference>
<dbReference type="NCBIfam" id="NF002140">
    <property type="entry name" value="PRK00977.1-4"/>
    <property type="match status" value="1"/>
</dbReference>
<dbReference type="NCBIfam" id="TIGR01280">
    <property type="entry name" value="xseB"/>
    <property type="match status" value="1"/>
</dbReference>
<dbReference type="PANTHER" id="PTHR34137">
    <property type="entry name" value="EXODEOXYRIBONUCLEASE 7 SMALL SUBUNIT"/>
    <property type="match status" value="1"/>
</dbReference>
<dbReference type="PANTHER" id="PTHR34137:SF1">
    <property type="entry name" value="EXODEOXYRIBONUCLEASE 7 SMALL SUBUNIT"/>
    <property type="match status" value="1"/>
</dbReference>
<dbReference type="Pfam" id="PF02609">
    <property type="entry name" value="Exonuc_VII_S"/>
    <property type="match status" value="1"/>
</dbReference>
<dbReference type="PIRSF" id="PIRSF006488">
    <property type="entry name" value="Exonuc_VII_S"/>
    <property type="match status" value="1"/>
</dbReference>
<dbReference type="SUPFAM" id="SSF116842">
    <property type="entry name" value="XseB-like"/>
    <property type="match status" value="1"/>
</dbReference>
<gene>
    <name evidence="1" type="primary">xseB</name>
    <name type="ordered locus">CLB_1821</name>
</gene>
<organism>
    <name type="scientific">Clostridium botulinum (strain ATCC 19397 / Type A)</name>
    <dbReference type="NCBI Taxonomy" id="441770"/>
    <lineage>
        <taxon>Bacteria</taxon>
        <taxon>Bacillati</taxon>
        <taxon>Bacillota</taxon>
        <taxon>Clostridia</taxon>
        <taxon>Eubacteriales</taxon>
        <taxon>Clostridiaceae</taxon>
        <taxon>Clostridium</taxon>
    </lineage>
</organism>